<evidence type="ECO:0000255" key="1">
    <source>
        <dbReference type="HAMAP-Rule" id="MF_01334"/>
    </source>
</evidence>
<evidence type="ECO:0000305" key="2"/>
<reference key="1">
    <citation type="journal article" date="2004" name="Proc. Natl. Acad. Sci. U.S.A.">
        <title>Structural flexibility in the Burkholderia mallei genome.</title>
        <authorList>
            <person name="Nierman W.C."/>
            <person name="DeShazer D."/>
            <person name="Kim H.S."/>
            <person name="Tettelin H."/>
            <person name="Nelson K.E."/>
            <person name="Feldblyum T.V."/>
            <person name="Ulrich R.L."/>
            <person name="Ronning C.M."/>
            <person name="Brinkac L.M."/>
            <person name="Daugherty S.C."/>
            <person name="Davidsen T.D."/>
            <person name="DeBoy R.T."/>
            <person name="Dimitrov G."/>
            <person name="Dodson R.J."/>
            <person name="Durkin A.S."/>
            <person name="Gwinn M.L."/>
            <person name="Haft D.H."/>
            <person name="Khouri H.M."/>
            <person name="Kolonay J.F."/>
            <person name="Madupu R."/>
            <person name="Mohammoud Y."/>
            <person name="Nelson W.C."/>
            <person name="Radune D."/>
            <person name="Romero C.M."/>
            <person name="Sarria S."/>
            <person name="Selengut J."/>
            <person name="Shamblin C."/>
            <person name="Sullivan S.A."/>
            <person name="White O."/>
            <person name="Yu Y."/>
            <person name="Zafar N."/>
            <person name="Zhou L."/>
            <person name="Fraser C.M."/>
        </authorList>
    </citation>
    <scope>NUCLEOTIDE SEQUENCE [LARGE SCALE GENOMIC DNA]</scope>
    <source>
        <strain>ATCC 23344</strain>
    </source>
</reference>
<sequence length="204" mass="21940">MKVVAFERQQQGTGASRRLRNAGKTTGIVYGGEAAPQMIELDHNALWHALKKEAFHSSILDLEVAGKSQRVLLRDVQYHPFRQLVLHVDFQRIDPKKKLHTKAPLHFLNAETSPAVKLSSAVVSHVVTEIEIECLPADLPEFLEVDLSKIEAGQSLHAKDIALPNGVALTAHVDAENPVIASATIPAGAVSDEAAAGEGETPAA</sequence>
<name>RL25_BURMA</name>
<dbReference type="EMBL" id="CP000010">
    <property type="protein sequence ID" value="AAU48101.1"/>
    <property type="molecule type" value="Genomic_DNA"/>
</dbReference>
<dbReference type="RefSeq" id="WP_004200150.1">
    <property type="nucleotide sequence ID" value="NC_006348.1"/>
</dbReference>
<dbReference type="RefSeq" id="YP_104605.1">
    <property type="nucleotide sequence ID" value="NC_006348.1"/>
</dbReference>
<dbReference type="SMR" id="Q62FC2"/>
<dbReference type="KEGG" id="bma:BMA3121"/>
<dbReference type="PATRIC" id="fig|243160.12.peg.3197"/>
<dbReference type="eggNOG" id="COG1825">
    <property type="taxonomic scope" value="Bacteria"/>
</dbReference>
<dbReference type="HOGENOM" id="CLU_075939_0_1_4"/>
<dbReference type="Proteomes" id="UP000006693">
    <property type="component" value="Chromosome 1"/>
</dbReference>
<dbReference type="GO" id="GO:0022625">
    <property type="term" value="C:cytosolic large ribosomal subunit"/>
    <property type="evidence" value="ECO:0007669"/>
    <property type="project" value="TreeGrafter"/>
</dbReference>
<dbReference type="GO" id="GO:0008097">
    <property type="term" value="F:5S rRNA binding"/>
    <property type="evidence" value="ECO:0007669"/>
    <property type="project" value="InterPro"/>
</dbReference>
<dbReference type="GO" id="GO:0003735">
    <property type="term" value="F:structural constituent of ribosome"/>
    <property type="evidence" value="ECO:0007669"/>
    <property type="project" value="InterPro"/>
</dbReference>
<dbReference type="GO" id="GO:0006412">
    <property type="term" value="P:translation"/>
    <property type="evidence" value="ECO:0007669"/>
    <property type="project" value="UniProtKB-UniRule"/>
</dbReference>
<dbReference type="CDD" id="cd00495">
    <property type="entry name" value="Ribosomal_L25_TL5_CTC"/>
    <property type="match status" value="1"/>
</dbReference>
<dbReference type="Gene3D" id="2.170.120.20">
    <property type="entry name" value="Ribosomal protein L25, beta domain"/>
    <property type="match status" value="1"/>
</dbReference>
<dbReference type="Gene3D" id="2.40.240.10">
    <property type="entry name" value="Ribosomal Protein L25, Chain P"/>
    <property type="match status" value="1"/>
</dbReference>
<dbReference type="HAMAP" id="MF_01334">
    <property type="entry name" value="Ribosomal_bL25_CTC"/>
    <property type="match status" value="1"/>
</dbReference>
<dbReference type="InterPro" id="IPR020056">
    <property type="entry name" value="Rbsml_bL25/Gln-tRNA_synth_N"/>
</dbReference>
<dbReference type="InterPro" id="IPR011035">
    <property type="entry name" value="Ribosomal_bL25/Gln-tRNA_synth"/>
</dbReference>
<dbReference type="InterPro" id="IPR020057">
    <property type="entry name" value="Ribosomal_bL25_b-dom"/>
</dbReference>
<dbReference type="InterPro" id="IPR037121">
    <property type="entry name" value="Ribosomal_bL25_C"/>
</dbReference>
<dbReference type="InterPro" id="IPR001021">
    <property type="entry name" value="Ribosomal_bL25_long"/>
</dbReference>
<dbReference type="InterPro" id="IPR029751">
    <property type="entry name" value="Ribosomal_L25_dom"/>
</dbReference>
<dbReference type="InterPro" id="IPR020930">
    <property type="entry name" value="Ribosomal_uL5_bac-type"/>
</dbReference>
<dbReference type="NCBIfam" id="TIGR00731">
    <property type="entry name" value="bL25_bact_ctc"/>
    <property type="match status" value="1"/>
</dbReference>
<dbReference type="NCBIfam" id="NF004128">
    <property type="entry name" value="PRK05618.1-2"/>
    <property type="match status" value="1"/>
</dbReference>
<dbReference type="NCBIfam" id="NF004130">
    <property type="entry name" value="PRK05618.1-5"/>
    <property type="match status" value="1"/>
</dbReference>
<dbReference type="NCBIfam" id="NF004612">
    <property type="entry name" value="PRK05943.1"/>
    <property type="match status" value="1"/>
</dbReference>
<dbReference type="PANTHER" id="PTHR33284">
    <property type="entry name" value="RIBOSOMAL PROTEIN L25/GLN-TRNA SYNTHETASE, ANTI-CODON-BINDING DOMAIN-CONTAINING PROTEIN"/>
    <property type="match status" value="1"/>
</dbReference>
<dbReference type="PANTHER" id="PTHR33284:SF1">
    <property type="entry name" value="RIBOSOMAL PROTEIN L25_GLN-TRNA SYNTHETASE, ANTI-CODON-BINDING DOMAIN-CONTAINING PROTEIN"/>
    <property type="match status" value="1"/>
</dbReference>
<dbReference type="Pfam" id="PF01386">
    <property type="entry name" value="Ribosomal_L25p"/>
    <property type="match status" value="1"/>
</dbReference>
<dbReference type="Pfam" id="PF14693">
    <property type="entry name" value="Ribosomal_TL5_C"/>
    <property type="match status" value="1"/>
</dbReference>
<dbReference type="SUPFAM" id="SSF50715">
    <property type="entry name" value="Ribosomal protein L25-like"/>
    <property type="match status" value="1"/>
</dbReference>
<organism>
    <name type="scientific">Burkholderia mallei (strain ATCC 23344)</name>
    <dbReference type="NCBI Taxonomy" id="243160"/>
    <lineage>
        <taxon>Bacteria</taxon>
        <taxon>Pseudomonadati</taxon>
        <taxon>Pseudomonadota</taxon>
        <taxon>Betaproteobacteria</taxon>
        <taxon>Burkholderiales</taxon>
        <taxon>Burkholderiaceae</taxon>
        <taxon>Burkholderia</taxon>
        <taxon>pseudomallei group</taxon>
    </lineage>
</organism>
<feature type="chain" id="PRO_0000181527" description="Large ribosomal subunit protein bL25">
    <location>
        <begin position="1"/>
        <end position="204"/>
    </location>
</feature>
<comment type="function">
    <text evidence="1">This is one of the proteins that binds to the 5S RNA in the ribosome where it forms part of the central protuberance.</text>
</comment>
<comment type="subunit">
    <text evidence="1">Part of the 50S ribosomal subunit; part of the 5S rRNA/L5/L18/L25 subcomplex. Contacts the 5S rRNA. Binds to the 5S rRNA independently of L5 and L18.</text>
</comment>
<comment type="similarity">
    <text evidence="1">Belongs to the bacterial ribosomal protein bL25 family. CTC subfamily.</text>
</comment>
<keyword id="KW-1185">Reference proteome</keyword>
<keyword id="KW-0687">Ribonucleoprotein</keyword>
<keyword id="KW-0689">Ribosomal protein</keyword>
<keyword id="KW-0694">RNA-binding</keyword>
<keyword id="KW-0699">rRNA-binding</keyword>
<protein>
    <recommendedName>
        <fullName evidence="1">Large ribosomal subunit protein bL25</fullName>
    </recommendedName>
    <alternativeName>
        <fullName evidence="2">50S ribosomal protein L25</fullName>
    </alternativeName>
    <alternativeName>
        <fullName evidence="1">General stress protein CTC</fullName>
    </alternativeName>
</protein>
<proteinExistence type="inferred from homology"/>
<gene>
    <name evidence="1" type="primary">rplY</name>
    <name evidence="1" type="synonym">ctc</name>
    <name type="ordered locus">BMA3121</name>
</gene>
<accession>Q62FC2</accession>